<evidence type="ECO:0000250" key="1">
    <source>
        <dbReference type="UniProtKB" id="P0C9B9"/>
    </source>
</evidence>
<evidence type="ECO:0000255" key="2"/>
<evidence type="ECO:0000269" key="3">
    <source>
    </source>
</evidence>
<evidence type="ECO:0000269" key="4">
    <source>
    </source>
</evidence>
<evidence type="ECO:0000269" key="5">
    <source>
    </source>
</evidence>
<evidence type="ECO:0000269" key="6">
    <source>
    </source>
</evidence>
<evidence type="ECO:0000269" key="7">
    <source>
    </source>
</evidence>
<evidence type="ECO:0000269" key="8">
    <source>
    </source>
</evidence>
<evidence type="ECO:0000269" key="9">
    <source>
    </source>
</evidence>
<evidence type="ECO:0000269" key="10">
    <source>
    </source>
</evidence>
<evidence type="ECO:0000269" key="11">
    <source>
    </source>
</evidence>
<evidence type="ECO:0000269" key="12">
    <source>
    </source>
</evidence>
<evidence type="ECO:0000305" key="13"/>
<evidence type="ECO:0000305" key="14">
    <source>
    </source>
</evidence>
<organismHost>
    <name type="scientific">Ornithodoros</name>
    <name type="common">relapsing fever ticks</name>
    <dbReference type="NCBI Taxonomy" id="6937"/>
</organismHost>
<organismHost>
    <name type="scientific">Sus scrofa</name>
    <name type="common">Pig</name>
    <dbReference type="NCBI Taxonomy" id="9823"/>
</organismHost>
<feature type="chain" id="PRO_0000101738" description="Cysteine protease S273R">
    <location>
        <begin position="1"/>
        <end position="273"/>
    </location>
</feature>
<feature type="active site" evidence="14">
    <location>
        <position position="168"/>
    </location>
</feature>
<feature type="active site" evidence="1">
    <location>
        <position position="187"/>
    </location>
</feature>
<feature type="active site" description="Nucleophile" evidence="14">
    <location>
        <position position="232"/>
    </location>
</feature>
<feature type="binding site" evidence="2">
    <location>
        <position position="226"/>
    </location>
    <ligand>
        <name>substrate</name>
    </ligand>
</feature>
<feature type="mutagenesis site" description="Loss of activity." evidence="3 8">
    <original>H</original>
    <variation>R</variation>
    <location>
        <position position="168"/>
    </location>
</feature>
<feature type="mutagenesis site" description="Loss of activity." evidence="3 8">
    <original>C</original>
    <variation>S</variation>
    <location>
        <position position="232"/>
    </location>
</feature>
<organism>
    <name type="scientific">African swine fever virus (strain Badajoz 1971 Vero-adapted)</name>
    <name type="common">Ba71V</name>
    <name type="synonym">ASFV</name>
    <dbReference type="NCBI Taxonomy" id="10498"/>
    <lineage>
        <taxon>Viruses</taxon>
        <taxon>Varidnaviria</taxon>
        <taxon>Bamfordvirae</taxon>
        <taxon>Nucleocytoviricota</taxon>
        <taxon>Pokkesviricetes</taxon>
        <taxon>Asfuvirales</taxon>
        <taxon>Asfarviridae</taxon>
        <taxon>Asfivirus</taxon>
        <taxon>African swine fever virus</taxon>
    </lineage>
</organism>
<reference key="1">
    <citation type="journal article" date="1992" name="Virology">
        <title>A gene homologous to topoisomerase II in African swine fever virus.</title>
        <authorList>
            <person name="Garcia-Beato R."/>
            <person name="Freije J.M.P."/>
            <person name="Lopez-Otin C."/>
            <person name="Blasco R."/>
            <person name="Vinuela E."/>
        </authorList>
    </citation>
    <scope>NUCLEOTIDE SEQUENCE [GENOMIC DNA]</scope>
</reference>
<reference key="2">
    <citation type="journal article" date="1995" name="Virology">
        <title>Analysis of the complete nucleotide sequence of African swine fever virus.</title>
        <authorList>
            <person name="Yanez R.J."/>
            <person name="Rodriguez J.M."/>
            <person name="Nogal M.L."/>
            <person name="Yuste L."/>
            <person name="Enriquez C."/>
            <person name="Rodriguez J.F."/>
            <person name="Vinuela E."/>
        </authorList>
    </citation>
    <scope>NUCLEOTIDE SEQUENCE [LARGE SCALE GENOMIC DNA]</scope>
</reference>
<reference key="3">
    <citation type="journal article" date="2001" name="J. Biol. Chem.">
        <title>African swine fever virus protease, a new viral member of the SUMO-1-specific protease family.</title>
        <authorList>
            <person name="Andres G."/>
            <person name="Alejo A."/>
            <person name="Simon-Mateo C."/>
            <person name="Salas M.L."/>
        </authorList>
    </citation>
    <scope>FUNCTION</scope>
    <scope>CHARACTERIZATION</scope>
    <scope>SUBCELLULAR LOCATION</scope>
    <scope>MUTAGENESIS OF HIS-168 AND CYS-232</scope>
    <scope>ACTIVE SITE</scope>
</reference>
<reference key="4">
    <citation type="journal article" date="2002" name="J. Virol.">
        <title>African swine fever virus polyproteins pp220 and pp62 assemble into the core shell.</title>
        <authorList>
            <person name="Andres G."/>
            <person name="Alejo A."/>
            <person name="Salas J."/>
            <person name="Salas M.L."/>
        </authorList>
    </citation>
    <scope>FUNCTION</scope>
</reference>
<reference key="5">
    <citation type="journal article" date="2003" name="J. Virol.">
        <title>Polyprotein processing protease of African swine fever virus: purification and biochemical characterization.</title>
        <authorList>
            <person name="Rubio D."/>
            <person name="Alejo A."/>
            <person name="Rodriguez I."/>
            <person name="Salas M.L."/>
        </authorList>
    </citation>
    <scope>CHARACTERIZATION</scope>
</reference>
<reference key="6">
    <citation type="journal article" date="2003" name="J. Virol.">
        <title>African swine fever virus proteinase is essential for core maturation and infectivity.</title>
        <authorList>
            <person name="Alejo A."/>
            <person name="Andres G."/>
            <person name="Salas M.L."/>
        </authorList>
    </citation>
    <scope>FUNCTION</scope>
</reference>
<reference key="7">
    <citation type="journal article" date="2018" name="J. Virol.">
        <title>A Proteomic Atlas of the African Swine Fever Virus Particle.</title>
        <authorList>
            <person name="Alejo A."/>
            <person name="Matamoros T."/>
            <person name="Guerra M."/>
            <person name="Andres G."/>
        </authorList>
    </citation>
    <scope>SUBCELLULAR LOCATION</scope>
</reference>
<reference key="8">
    <citation type="journal article" date="2020" name="J. Virol.">
        <title>The African Swine Fever Virus Transcriptome.</title>
        <authorList>
            <person name="Cackett G."/>
            <person name="Matelska D."/>
            <person name="Sykora M."/>
            <person name="Portugal R."/>
            <person name="Malecki M."/>
            <person name="Baehler J."/>
            <person name="Dixon L."/>
            <person name="Werner F."/>
        </authorList>
    </citation>
    <scope>INDUCTION</scope>
</reference>
<reference key="9">
    <citation type="journal article" date="2022" name="J. Biol. Chem.">
        <title>African swine fever virus cysteine protease pS273R inhibits pyroptosis by noncanonically cleaving gasdermin D.</title>
        <authorList>
            <person name="Zhao G."/>
            <person name="Li T."/>
            <person name="Liu X."/>
            <person name="Zhang T."/>
            <person name="Zhang Z."/>
            <person name="Kang L."/>
            <person name="Song J."/>
            <person name="Zhou S."/>
            <person name="Chen X."/>
            <person name="Wang X."/>
            <person name="Li J."/>
            <person name="Huang L."/>
            <person name="Li C."/>
            <person name="Bu Z."/>
            <person name="Zheng J."/>
            <person name="Weng C."/>
        </authorList>
    </citation>
    <scope>FUNCTION</scope>
    <scope>SUBCELLULAR LOCATION</scope>
    <scope>CATALYTIC ACTIVITY</scope>
    <scope>MUTAGENESIS OF HIS-168 AND CYS-232</scope>
</reference>
<reference key="10">
    <citation type="journal article" date="2022" name="Virulence">
        <title>The African swine fever virus protease pS273R inhibits DNA sensing cGAS-STING pathway by targeting IKKepsilon.</title>
        <authorList>
            <person name="Luo J."/>
            <person name="Zhang J."/>
            <person name="Ni J."/>
            <person name="Jiang S."/>
            <person name="Xia N."/>
            <person name="Guo Y."/>
            <person name="Shao Q."/>
            <person name="Cao Q."/>
            <person name="Zheng W."/>
            <person name="Chen N."/>
            <person name="Zhang Q."/>
            <person name="Chen H."/>
            <person name="Chen Q."/>
            <person name="Zhu H."/>
            <person name="Meurens F."/>
            <person name="Zhu J."/>
        </authorList>
    </citation>
    <scope>FUNCTION</scope>
</reference>
<reference key="11">
    <citation type="journal article" date="2022" name="Virol. Sin.">
        <title>FoxJ1 inhibits African swine fever virus replication and viral S273R protein decreases the expression of FoxJ1 to impair its antiviral effect.</title>
        <authorList>
            <person name="Ma C."/>
            <person name="Li S."/>
            <person name="Yang F."/>
            <person name="Cao W."/>
            <person name="Liu H."/>
            <person name="Feng T."/>
            <person name="Zhang K."/>
            <person name="Zhu Z."/>
            <person name="Liu X."/>
            <person name="Hu Y."/>
            <person name="Zheng H."/>
        </authorList>
    </citation>
    <scope>FUNCTION</scope>
</reference>
<reference key="12">
    <citation type="journal article" date="2023" name="J. Virol.">
        <title>African Swine Fever Virus Cysteine Protease pS273R Inhibits Type I Interferon Signaling by Mediating STAT2 Degradation.</title>
        <authorList>
            <person name="Li Y.H."/>
            <person name="Peng J.L."/>
            <person name="Xu Z.S."/>
            <person name="Xiong M.G."/>
            <person name="Wu H.N."/>
            <person name="Wang S.Y."/>
            <person name="Li D."/>
            <person name="Zhu G.Q."/>
            <person name="Ran Y."/>
            <person name="Wang Y.Y."/>
        </authorList>
    </citation>
    <scope>FUNCTION</scope>
</reference>
<reference key="13">
    <citation type="journal article" date="2023" name="J. Biol. Chem.">
        <title>African swine fever virus pS273R antagonizes stress granule formation by cleaving the nucleating protein G3BP1 to facilitate viral replication.</title>
        <authorList>
            <person name="Li T."/>
            <person name="Li X."/>
            <person name="Wang X."/>
            <person name="Chen X."/>
            <person name="Zhao G."/>
            <person name="Liu C."/>
            <person name="Bao M."/>
            <person name="Song J."/>
            <person name="Li J."/>
            <person name="Huang L."/>
            <person name="Rong J."/>
            <person name="Tian K."/>
            <person name="Deng J."/>
            <person name="Zhu J."/>
            <person name="Cai X."/>
            <person name="Bu Z."/>
            <person name="Zheng J."/>
            <person name="Weng C."/>
        </authorList>
    </citation>
    <scope>FUNCTION</scope>
</reference>
<accession>Q00946</accession>
<keyword id="KW-1035">Host cytoplasm</keyword>
<keyword id="KW-0945">Host-virus interaction</keyword>
<keyword id="KW-0378">Hydrolase</keyword>
<keyword id="KW-1090">Inhibition of host innate immune response by virus</keyword>
<keyword id="KW-0426">Late protein</keyword>
<keyword id="KW-0645">Protease</keyword>
<keyword id="KW-1185">Reference proteome</keyword>
<keyword id="KW-0788">Thiol protease</keyword>
<keyword id="KW-0899">Viral immunoevasion</keyword>
<keyword id="KW-0946">Virion</keyword>
<name>VPRT_ASFB7</name>
<sequence>MSILEKITSSPSECAEHLTNKDSCLSKKIQKELTSFLEKKETLGCDSESCVITHPAVKAYAQQKGLDLSKELETRFKAPGPRNNTGLLTNFNIDETLQRWAIKYTKFFNCPFSMMDFERVHYKFNQVDMVKVYKGEELQYVEGKVVKRPCNTFGCVLNTDFSTGTGKHWVAIFVDMRGDCWSIEYFNSAGNSPPGPVIRWMERVKQQLLKIHHTVKTLAVTNIRHQRSQTECGPYSLFYIRARLDNVSYAHFISARITDEDMYKFRTHLFRIA</sequence>
<comment type="function">
    <text evidence="3 4 5 8 9 10 11 12">Cysteine protease that plays several role during infection including processing of the structural polyprotein or inhibition of the host immune response. Catalyzes the maturation of the pp220 and pp62 polyprotein precursors into core-shell proteins (PubMed:12438573). Plays a role in the disruption of host pyroptosis via specific cleavage of gasdermin D/GSDMD (PubMed:34890644). In addition, strongly decreases the host cGAS-STING signaling by targeting IKBKE via its enzymatic activity (PubMed:35437104). Also impairs host FOXJ1-mediated antiviral effect via degradation of FOXJ1 (PubMed:35513267). Cleaves host G3BP1 inducing loss of stress granules formation (PubMed:37209818). Interacts with and induces the degradation of host STAT2 via polyubiquitination of the latter (PubMed:36856422).</text>
</comment>
<comment type="subcellular location">
    <subcellularLocation>
        <location evidence="3 8">Host cytoplasm</location>
    </subcellularLocation>
    <subcellularLocation>
        <location evidence="3 6">Virion</location>
    </subcellularLocation>
    <text>Found in the perinuclear cytoplasmic viral factories during assembly.</text>
</comment>
<comment type="induction">
    <text evidence="7">Expressed in the late phase of the viral replicative cycle.</text>
</comment>
<comment type="similarity">
    <text evidence="13">Belongs to the peptidase C63 family.</text>
</comment>
<protein>
    <recommendedName>
        <fullName>Cysteine protease S273R</fullName>
        <shortName>pS273R</shortName>
        <ecNumber evidence="8 9">3.4.22.-</ecNumber>
    </recommendedName>
</protein>
<gene>
    <name type="ordered locus">Ba71V-111</name>
    <name type="ORF">S273R</name>
</gene>
<proteinExistence type="evidence at protein level"/>
<dbReference type="EC" id="3.4.22.-" evidence="8 9"/>
<dbReference type="EMBL" id="M88699">
    <property type="protein sequence ID" value="AAA42734.1"/>
    <property type="molecule type" value="Genomic_DNA"/>
</dbReference>
<dbReference type="EMBL" id="U18466">
    <property type="protein sequence ID" value="AAA65340.1"/>
    <property type="molecule type" value="Genomic_DNA"/>
</dbReference>
<dbReference type="PIR" id="A42549">
    <property type="entry name" value="A42549"/>
</dbReference>
<dbReference type="RefSeq" id="NP_042804.1">
    <property type="nucleotide sequence ID" value="NC_001659.2"/>
</dbReference>
<dbReference type="SMR" id="Q00946"/>
<dbReference type="MEROPS" id="C63.001"/>
<dbReference type="GeneID" id="22220340"/>
<dbReference type="KEGG" id="vg:22220340"/>
<dbReference type="Proteomes" id="UP000000624">
    <property type="component" value="Segment"/>
</dbReference>
<dbReference type="GO" id="GO:0030430">
    <property type="term" value="C:host cell cytoplasm"/>
    <property type="evidence" value="ECO:0007669"/>
    <property type="project" value="UniProtKB-SubCell"/>
</dbReference>
<dbReference type="GO" id="GO:0044423">
    <property type="term" value="C:virion component"/>
    <property type="evidence" value="ECO:0007669"/>
    <property type="project" value="UniProtKB-KW"/>
</dbReference>
<dbReference type="GO" id="GO:0004197">
    <property type="term" value="F:cysteine-type endopeptidase activity"/>
    <property type="evidence" value="ECO:0007669"/>
    <property type="project" value="InterPro"/>
</dbReference>
<dbReference type="GO" id="GO:0006508">
    <property type="term" value="P:proteolysis"/>
    <property type="evidence" value="ECO:0007669"/>
    <property type="project" value="UniProtKB-KW"/>
</dbReference>
<dbReference type="GO" id="GO:0052170">
    <property type="term" value="P:symbiont-mediated suppression of host innate immune response"/>
    <property type="evidence" value="ECO:0007669"/>
    <property type="project" value="UniProtKB-KW"/>
</dbReference>
<dbReference type="GO" id="GO:0019082">
    <property type="term" value="P:viral protein processing"/>
    <property type="evidence" value="ECO:0007669"/>
    <property type="project" value="InterPro"/>
</dbReference>
<dbReference type="Gene3D" id="3.40.395.10">
    <property type="entry name" value="Adenoviral Proteinase, Chain A"/>
    <property type="match status" value="1"/>
</dbReference>
<dbReference type="InterPro" id="IPR038765">
    <property type="entry name" value="Papain-like_cys_pep_sf"/>
</dbReference>
<dbReference type="InterPro" id="IPR003653">
    <property type="entry name" value="Peptidase_C48_C"/>
</dbReference>
<dbReference type="InterPro" id="IPR016510">
    <property type="entry name" value="VPRT"/>
</dbReference>
<dbReference type="Pfam" id="PF02902">
    <property type="entry name" value="Peptidase_C48"/>
    <property type="match status" value="1"/>
</dbReference>
<dbReference type="PIRSF" id="PIRSF007159">
    <property type="entry name" value="Peptidase_ASVF"/>
    <property type="match status" value="1"/>
</dbReference>
<dbReference type="SUPFAM" id="SSF54001">
    <property type="entry name" value="Cysteine proteinases"/>
    <property type="match status" value="1"/>
</dbReference>